<gene>
    <name type="ordered locus">Bpro_4324</name>
</gene>
<evidence type="ECO:0000255" key="1">
    <source>
        <dbReference type="HAMAP-Rule" id="MF_00457"/>
    </source>
</evidence>
<keyword id="KW-0378">Hydrolase</keyword>
<keyword id="KW-1185">Reference proteome</keyword>
<feature type="chain" id="PRO_0000367198" description="UPF0173 metal-dependent hydrolase Bpro_4324">
    <location>
        <begin position="1"/>
        <end position="273"/>
    </location>
</feature>
<name>Y4324_POLSJ</name>
<dbReference type="EMBL" id="CP000316">
    <property type="protein sequence ID" value="ABE46214.1"/>
    <property type="molecule type" value="Genomic_DNA"/>
</dbReference>
<dbReference type="RefSeq" id="WP_011485203.1">
    <property type="nucleotide sequence ID" value="NC_007948.1"/>
</dbReference>
<dbReference type="SMR" id="Q123S8"/>
<dbReference type="STRING" id="296591.Bpro_4324"/>
<dbReference type="KEGG" id="pol:Bpro_4324"/>
<dbReference type="eggNOG" id="COG2220">
    <property type="taxonomic scope" value="Bacteria"/>
</dbReference>
<dbReference type="HOGENOM" id="CLU_070010_4_0_4"/>
<dbReference type="OrthoDB" id="9805728at2"/>
<dbReference type="Proteomes" id="UP000001983">
    <property type="component" value="Chromosome"/>
</dbReference>
<dbReference type="GO" id="GO:0016787">
    <property type="term" value="F:hydrolase activity"/>
    <property type="evidence" value="ECO:0007669"/>
    <property type="project" value="UniProtKB-UniRule"/>
</dbReference>
<dbReference type="Gene3D" id="3.60.15.10">
    <property type="entry name" value="Ribonuclease Z/Hydroxyacylglutathione hydrolase-like"/>
    <property type="match status" value="1"/>
</dbReference>
<dbReference type="HAMAP" id="MF_00457">
    <property type="entry name" value="UPF0173"/>
    <property type="match status" value="1"/>
</dbReference>
<dbReference type="InterPro" id="IPR001279">
    <property type="entry name" value="Metallo-B-lactamas"/>
</dbReference>
<dbReference type="InterPro" id="IPR036866">
    <property type="entry name" value="RibonucZ/Hydroxyglut_hydro"/>
</dbReference>
<dbReference type="InterPro" id="IPR022877">
    <property type="entry name" value="UPF0173"/>
</dbReference>
<dbReference type="InterPro" id="IPR050114">
    <property type="entry name" value="UPF0173_UPF0282_UlaG_hydrolase"/>
</dbReference>
<dbReference type="NCBIfam" id="NF001911">
    <property type="entry name" value="PRK00685.1"/>
    <property type="match status" value="1"/>
</dbReference>
<dbReference type="PANTHER" id="PTHR43546:SF3">
    <property type="entry name" value="UPF0173 METAL-DEPENDENT HYDROLASE MJ1163"/>
    <property type="match status" value="1"/>
</dbReference>
<dbReference type="PANTHER" id="PTHR43546">
    <property type="entry name" value="UPF0173 METAL-DEPENDENT HYDROLASE MJ1163-RELATED"/>
    <property type="match status" value="1"/>
</dbReference>
<dbReference type="Pfam" id="PF13483">
    <property type="entry name" value="Lactamase_B_3"/>
    <property type="match status" value="1"/>
</dbReference>
<dbReference type="SMART" id="SM00849">
    <property type="entry name" value="Lactamase_B"/>
    <property type="match status" value="1"/>
</dbReference>
<dbReference type="SUPFAM" id="SSF56281">
    <property type="entry name" value="Metallo-hydrolase/oxidoreductase"/>
    <property type="match status" value="1"/>
</dbReference>
<reference key="1">
    <citation type="journal article" date="2008" name="Appl. Environ. Microbiol.">
        <title>The genome of Polaromonas sp. strain JS666: insights into the evolution of a hydrocarbon- and xenobiotic-degrading bacterium, and features of relevance to biotechnology.</title>
        <authorList>
            <person name="Mattes T.E."/>
            <person name="Alexander A.K."/>
            <person name="Richardson P.M."/>
            <person name="Munk A.C."/>
            <person name="Han C.S."/>
            <person name="Stothard P."/>
            <person name="Coleman N.V."/>
        </authorList>
    </citation>
    <scope>NUCLEOTIDE SEQUENCE [LARGE SCALE GENOMIC DNA]</scope>
    <source>
        <strain>JS666 / ATCC BAA-500</strain>
    </source>
</reference>
<accession>Q123S8</accession>
<organism>
    <name type="scientific">Polaromonas sp. (strain JS666 / ATCC BAA-500)</name>
    <dbReference type="NCBI Taxonomy" id="296591"/>
    <lineage>
        <taxon>Bacteria</taxon>
        <taxon>Pseudomonadati</taxon>
        <taxon>Pseudomonadota</taxon>
        <taxon>Betaproteobacteria</taxon>
        <taxon>Burkholderiales</taxon>
        <taxon>Comamonadaceae</taxon>
        <taxon>Polaromonas</taxon>
    </lineage>
</organism>
<comment type="similarity">
    <text evidence="1">Belongs to the UPF0173 family.</text>
</comment>
<protein>
    <recommendedName>
        <fullName evidence="1">UPF0173 metal-dependent hydrolase Bpro_4324</fullName>
    </recommendedName>
</protein>
<sequence>MRKLLRVLLACLAAPLLHCAWAQPATGKTEVLWLGQSAFRISTPGGKVIVTDPWLKLNPLTPAEYKNLQALGKVDVILVTHGHWDHFADAPELALLNQVPMHAPGDMNQTVGLLGILPPNLVPRFNKSGTITPAPGIKVTAVKAEHSSVIVWKNPSTGKDESHPGGEPVGFIIELENGFRIYHMGDTGLFSDMRFIAEYYKPDLVLMPIGGHFTMGPADAAYATREWLKPKTVIPMHYGANPLGRGTPTEYMRALGDSGTRVLPLKPGEKAEF</sequence>
<proteinExistence type="inferred from homology"/>